<accession>Q0JG98</accession>
<accession>A0A0P0VCG9</accession>
<accession>Q40708</accession>
<accession>Q942Y8</accession>
<gene>
    <name type="primary">PIR7A</name>
    <name type="ordered locus">Os01g0934900</name>
    <name type="ordered locus">LOC_Os01g70860</name>
    <name type="ORF">P0423A12.27</name>
    <name type="ORF">P0492G09.8</name>
</gene>
<keyword id="KW-0378">Hydrolase</keyword>
<keyword id="KW-1185">Reference proteome</keyword>
<keyword id="KW-0719">Serine esterase</keyword>
<organism>
    <name type="scientific">Oryza sativa subsp. japonica</name>
    <name type="common">Rice</name>
    <dbReference type="NCBI Taxonomy" id="39947"/>
    <lineage>
        <taxon>Eukaryota</taxon>
        <taxon>Viridiplantae</taxon>
        <taxon>Streptophyta</taxon>
        <taxon>Embryophyta</taxon>
        <taxon>Tracheophyta</taxon>
        <taxon>Spermatophyta</taxon>
        <taxon>Magnoliopsida</taxon>
        <taxon>Liliopsida</taxon>
        <taxon>Poales</taxon>
        <taxon>Poaceae</taxon>
        <taxon>BOP clade</taxon>
        <taxon>Oryzoideae</taxon>
        <taxon>Oryzeae</taxon>
        <taxon>Oryzinae</taxon>
        <taxon>Oryza</taxon>
        <taxon>Oryza sativa</taxon>
    </lineage>
</organism>
<reference key="1">
    <citation type="journal article" date="2002" name="Nature">
        <title>The genome sequence and structure of rice chromosome 1.</title>
        <authorList>
            <person name="Sasaki T."/>
            <person name="Matsumoto T."/>
            <person name="Yamamoto K."/>
            <person name="Sakata K."/>
            <person name="Baba T."/>
            <person name="Katayose Y."/>
            <person name="Wu J."/>
            <person name="Niimura Y."/>
            <person name="Cheng Z."/>
            <person name="Nagamura Y."/>
            <person name="Antonio B.A."/>
            <person name="Kanamori H."/>
            <person name="Hosokawa S."/>
            <person name="Masukawa M."/>
            <person name="Arikawa K."/>
            <person name="Chiden Y."/>
            <person name="Hayashi M."/>
            <person name="Okamoto M."/>
            <person name="Ando T."/>
            <person name="Aoki H."/>
            <person name="Arita K."/>
            <person name="Hamada M."/>
            <person name="Harada C."/>
            <person name="Hijishita S."/>
            <person name="Honda M."/>
            <person name="Ichikawa Y."/>
            <person name="Idonuma A."/>
            <person name="Iijima M."/>
            <person name="Ikeda M."/>
            <person name="Ikeno M."/>
            <person name="Ito S."/>
            <person name="Ito T."/>
            <person name="Ito Y."/>
            <person name="Ito Y."/>
            <person name="Iwabuchi A."/>
            <person name="Kamiya K."/>
            <person name="Karasawa W."/>
            <person name="Katagiri S."/>
            <person name="Kikuta A."/>
            <person name="Kobayashi N."/>
            <person name="Kono I."/>
            <person name="Machita K."/>
            <person name="Maehara T."/>
            <person name="Mizuno H."/>
            <person name="Mizubayashi T."/>
            <person name="Mukai Y."/>
            <person name="Nagasaki H."/>
            <person name="Nakashima M."/>
            <person name="Nakama Y."/>
            <person name="Nakamichi Y."/>
            <person name="Nakamura M."/>
            <person name="Namiki N."/>
            <person name="Negishi M."/>
            <person name="Ohta I."/>
            <person name="Ono N."/>
            <person name="Saji S."/>
            <person name="Sakai K."/>
            <person name="Shibata M."/>
            <person name="Shimokawa T."/>
            <person name="Shomura A."/>
            <person name="Song J."/>
            <person name="Takazaki Y."/>
            <person name="Terasawa K."/>
            <person name="Tsuji K."/>
            <person name="Waki K."/>
            <person name="Yamagata H."/>
            <person name="Yamane H."/>
            <person name="Yoshiki S."/>
            <person name="Yoshihara R."/>
            <person name="Yukawa K."/>
            <person name="Zhong H."/>
            <person name="Iwama H."/>
            <person name="Endo T."/>
            <person name="Ito H."/>
            <person name="Hahn J.H."/>
            <person name="Kim H.-I."/>
            <person name="Eun M.-Y."/>
            <person name="Yano M."/>
            <person name="Jiang J."/>
            <person name="Gojobori T."/>
        </authorList>
    </citation>
    <scope>NUCLEOTIDE SEQUENCE [LARGE SCALE GENOMIC DNA]</scope>
    <source>
        <strain>cv. Nipponbare</strain>
    </source>
</reference>
<reference key="2">
    <citation type="journal article" date="2005" name="Nature">
        <title>The map-based sequence of the rice genome.</title>
        <authorList>
            <consortium name="International rice genome sequencing project (IRGSP)"/>
        </authorList>
    </citation>
    <scope>NUCLEOTIDE SEQUENCE [LARGE SCALE GENOMIC DNA]</scope>
    <source>
        <strain>cv. Nipponbare</strain>
    </source>
</reference>
<reference key="3">
    <citation type="journal article" date="2008" name="Nucleic Acids Res.">
        <title>The rice annotation project database (RAP-DB): 2008 update.</title>
        <authorList>
            <consortium name="The rice annotation project (RAP)"/>
        </authorList>
    </citation>
    <scope>GENOME REANNOTATION</scope>
    <source>
        <strain>cv. Nipponbare</strain>
    </source>
</reference>
<reference key="4">
    <citation type="journal article" date="2013" name="Rice">
        <title>Improvement of the Oryza sativa Nipponbare reference genome using next generation sequence and optical map data.</title>
        <authorList>
            <person name="Kawahara Y."/>
            <person name="de la Bastide M."/>
            <person name="Hamilton J.P."/>
            <person name="Kanamori H."/>
            <person name="McCombie W.R."/>
            <person name="Ouyang S."/>
            <person name="Schwartz D.C."/>
            <person name="Tanaka T."/>
            <person name="Wu J."/>
            <person name="Zhou S."/>
            <person name="Childs K.L."/>
            <person name="Davidson R.M."/>
            <person name="Lin H."/>
            <person name="Quesada-Ocampo L."/>
            <person name="Vaillancourt B."/>
            <person name="Sakai H."/>
            <person name="Lee S.S."/>
            <person name="Kim J."/>
            <person name="Numa H."/>
            <person name="Itoh T."/>
            <person name="Buell C.R."/>
            <person name="Matsumoto T."/>
        </authorList>
    </citation>
    <scope>GENOME REANNOTATION</scope>
    <source>
        <strain>cv. Nipponbare</strain>
    </source>
</reference>
<feature type="chain" id="PRO_0000070300" description="Probable esterase PIR7A">
    <location>
        <begin position="1"/>
        <end position="263"/>
    </location>
</feature>
<feature type="active site" description="Acyl-ester intermediate">
    <location>
        <position position="82"/>
    </location>
</feature>
<feature type="active site" description="Charge relay system" evidence="1">
    <location>
        <position position="213"/>
    </location>
</feature>
<feature type="active site" description="Charge relay system" evidence="1">
    <location>
        <position position="241"/>
    </location>
</feature>
<sequence length="263" mass="28607">MEDGGKHFVFVHGLGHGAWCWYRVVAALRAAGHRATALDMAAAGAHPARADEVGSLEEYSRPLLDAVAAAAPGERLVLVGHSLGGLSLALAMERFPDKVAAAVFLAACMPAAGKHMGITLEEFMRRIKPDFFMDSKTIVLNTNQEPRTAVLLGPKLLAEKLYNRSPPEDLTLATMLVRPGTNYIDDPIMKDETLLTEGNYGSVKRVFLVAMDDASSDEEMQRWTIDLSPGVEVEELAGADHMAMCSKPRELCDLLLRIAAKYD</sequence>
<dbReference type="EC" id="3.1.-.-"/>
<dbReference type="EMBL" id="AP003246">
    <property type="protein sequence ID" value="BAB93255.1"/>
    <property type="molecule type" value="Genomic_DNA"/>
</dbReference>
<dbReference type="EMBL" id="AP003266">
    <property type="protein sequence ID" value="BAB64187.1"/>
    <property type="molecule type" value="Genomic_DNA"/>
</dbReference>
<dbReference type="EMBL" id="AP008207">
    <property type="protein sequence ID" value="BAF07230.1"/>
    <property type="status" value="ALT_SEQ"/>
    <property type="molecule type" value="Genomic_DNA"/>
</dbReference>
<dbReference type="EMBL" id="AP014957">
    <property type="protein sequence ID" value="BAS76079.1"/>
    <property type="molecule type" value="Genomic_DNA"/>
</dbReference>
<dbReference type="RefSeq" id="XP_015629644.1">
    <property type="nucleotide sequence ID" value="XM_015774158.1"/>
</dbReference>
<dbReference type="SMR" id="Q0JG98"/>
<dbReference type="FunCoup" id="Q0JG98">
    <property type="interactions" value="14"/>
</dbReference>
<dbReference type="STRING" id="39947.Q0JG98"/>
<dbReference type="ESTHER" id="orysa-pir7a">
    <property type="family name" value="Hydroxynitrile_lyase"/>
</dbReference>
<dbReference type="PaxDb" id="39947-Q0JG98"/>
<dbReference type="EnsemblPlants" id="Os01t0934900-00">
    <property type="protein sequence ID" value="Os01t0934900-00"/>
    <property type="gene ID" value="Os01g0934900"/>
</dbReference>
<dbReference type="Gramene" id="Os01t0934900-00">
    <property type="protein sequence ID" value="Os01t0934900-00"/>
    <property type="gene ID" value="Os01g0934900"/>
</dbReference>
<dbReference type="eggNOG" id="ENOG502QQCC">
    <property type="taxonomic scope" value="Eukaryota"/>
</dbReference>
<dbReference type="HOGENOM" id="CLU_046066_0_1_1"/>
<dbReference type="InParanoid" id="Q0JG98"/>
<dbReference type="OMA" id="HTDIDMH"/>
<dbReference type="OrthoDB" id="408373at2759"/>
<dbReference type="Proteomes" id="UP000000763">
    <property type="component" value="Chromosome 1"/>
</dbReference>
<dbReference type="Proteomes" id="UP000059680">
    <property type="component" value="Chromosome 1"/>
</dbReference>
<dbReference type="GO" id="GO:0080030">
    <property type="term" value="F:methyl indole-3-acetate esterase activity"/>
    <property type="evidence" value="ECO:0000318"/>
    <property type="project" value="GO_Central"/>
</dbReference>
<dbReference type="GO" id="GO:0080032">
    <property type="term" value="F:methyl jasmonate esterase activity"/>
    <property type="evidence" value="ECO:0000318"/>
    <property type="project" value="GO_Central"/>
</dbReference>
<dbReference type="GO" id="GO:0080031">
    <property type="term" value="F:methyl salicylate esterase activity"/>
    <property type="evidence" value="ECO:0000318"/>
    <property type="project" value="GO_Central"/>
</dbReference>
<dbReference type="GO" id="GO:0009694">
    <property type="term" value="P:jasmonic acid metabolic process"/>
    <property type="evidence" value="ECO:0000318"/>
    <property type="project" value="GO_Central"/>
</dbReference>
<dbReference type="GO" id="GO:0009696">
    <property type="term" value="P:salicylic acid metabolic process"/>
    <property type="evidence" value="ECO:0000318"/>
    <property type="project" value="GO_Central"/>
</dbReference>
<dbReference type="FunFam" id="3.40.50.1820:FF:000051">
    <property type="entry name" value="(S)-hydroxynitrile lyase"/>
    <property type="match status" value="1"/>
</dbReference>
<dbReference type="Gene3D" id="3.40.50.1820">
    <property type="entry name" value="alpha/beta hydrolase"/>
    <property type="match status" value="1"/>
</dbReference>
<dbReference type="InterPro" id="IPR000073">
    <property type="entry name" value="AB_hydrolase_1"/>
</dbReference>
<dbReference type="InterPro" id="IPR029058">
    <property type="entry name" value="AB_hydrolase_fold"/>
</dbReference>
<dbReference type="InterPro" id="IPR045889">
    <property type="entry name" value="MES/HNL"/>
</dbReference>
<dbReference type="PANTHER" id="PTHR10992:SF1035">
    <property type="entry name" value="ESTERASE PIR7A-RELATED"/>
    <property type="match status" value="1"/>
</dbReference>
<dbReference type="PANTHER" id="PTHR10992">
    <property type="entry name" value="METHYLESTERASE FAMILY MEMBER"/>
    <property type="match status" value="1"/>
</dbReference>
<dbReference type="Pfam" id="PF12697">
    <property type="entry name" value="Abhydrolase_6"/>
    <property type="match status" value="1"/>
</dbReference>
<dbReference type="SUPFAM" id="SSF53474">
    <property type="entry name" value="alpha/beta-Hydrolases"/>
    <property type="match status" value="1"/>
</dbReference>
<dbReference type="PROSITE" id="PS00120">
    <property type="entry name" value="LIPASE_SER"/>
    <property type="match status" value="1"/>
</dbReference>
<name>PIR7A_ORYSJ</name>
<protein>
    <recommendedName>
        <fullName>Probable esterase PIR7A</fullName>
        <ecNumber>3.1.-.-</ecNumber>
    </recommendedName>
</protein>
<evidence type="ECO:0000255" key="1">
    <source>
        <dbReference type="PROSITE-ProRule" id="PRU10037"/>
    </source>
</evidence>
<evidence type="ECO:0000305" key="2"/>
<comment type="similarity">
    <text evidence="2">Belongs to the AB hydrolase superfamily.</text>
</comment>
<comment type="sequence caution" evidence="2">
    <conflict type="erroneous gene model prediction">
        <sequence resource="EMBL-CDS" id="BAF07230"/>
    </conflict>
</comment>
<proteinExistence type="inferred from homology"/>